<keyword id="KW-0963">Cytoplasm</keyword>
<keyword id="KW-0312">Gluconeogenesis</keyword>
<keyword id="KW-0324">Glycolysis</keyword>
<keyword id="KW-0413">Isomerase</keyword>
<evidence type="ECO:0000255" key="1">
    <source>
        <dbReference type="HAMAP-Rule" id="MF_00147"/>
    </source>
</evidence>
<sequence length="261" mass="27477">MARKPLIAGNWKMNLNHFEAIALVQKIAFSLPDKYFDKVDVTVIPPFTDLRSVQTLVDGDKLRLSYGAQDVSQHDSGAYTGEISGAFLAKLGCSFAVVGHSERRTYHHEDDALVAAKAAAAFRHGITPIVCIGEHLKVREAGNHVEHNVEQLRGSLAGLTSEQIGQAVIAYEPVWAIGTGRVAGAADAQEVCKAIRDELGKLSSPQLAAGIRVLYGGSVNAKNVGEIVAQEDVDGALVGGASLDGEQFATLSAIAAGGPLP</sequence>
<dbReference type="EC" id="5.3.1.1" evidence="1"/>
<dbReference type="EMBL" id="CP000384">
    <property type="protein sequence ID" value="ABG08514.1"/>
    <property type="molecule type" value="Genomic_DNA"/>
</dbReference>
<dbReference type="SMR" id="Q1B9C0"/>
<dbReference type="KEGG" id="mmc:Mmcs_2406"/>
<dbReference type="HOGENOM" id="CLU_024251_2_3_11"/>
<dbReference type="BioCyc" id="MSP164756:G1G6O-2457-MONOMER"/>
<dbReference type="UniPathway" id="UPA00109">
    <property type="reaction ID" value="UER00189"/>
</dbReference>
<dbReference type="UniPathway" id="UPA00138"/>
<dbReference type="GO" id="GO:0005829">
    <property type="term" value="C:cytosol"/>
    <property type="evidence" value="ECO:0007669"/>
    <property type="project" value="TreeGrafter"/>
</dbReference>
<dbReference type="GO" id="GO:0004807">
    <property type="term" value="F:triose-phosphate isomerase activity"/>
    <property type="evidence" value="ECO:0007669"/>
    <property type="project" value="UniProtKB-UniRule"/>
</dbReference>
<dbReference type="GO" id="GO:0006094">
    <property type="term" value="P:gluconeogenesis"/>
    <property type="evidence" value="ECO:0007669"/>
    <property type="project" value="UniProtKB-UniRule"/>
</dbReference>
<dbReference type="GO" id="GO:0046166">
    <property type="term" value="P:glyceraldehyde-3-phosphate biosynthetic process"/>
    <property type="evidence" value="ECO:0007669"/>
    <property type="project" value="TreeGrafter"/>
</dbReference>
<dbReference type="GO" id="GO:0019563">
    <property type="term" value="P:glycerol catabolic process"/>
    <property type="evidence" value="ECO:0007669"/>
    <property type="project" value="TreeGrafter"/>
</dbReference>
<dbReference type="GO" id="GO:0006096">
    <property type="term" value="P:glycolytic process"/>
    <property type="evidence" value="ECO:0007669"/>
    <property type="project" value="UniProtKB-UniRule"/>
</dbReference>
<dbReference type="CDD" id="cd00311">
    <property type="entry name" value="TIM"/>
    <property type="match status" value="1"/>
</dbReference>
<dbReference type="FunFam" id="3.20.20.70:FF:000020">
    <property type="entry name" value="Triosephosphate isomerase"/>
    <property type="match status" value="1"/>
</dbReference>
<dbReference type="Gene3D" id="3.20.20.70">
    <property type="entry name" value="Aldolase class I"/>
    <property type="match status" value="1"/>
</dbReference>
<dbReference type="HAMAP" id="MF_00147_B">
    <property type="entry name" value="TIM_B"/>
    <property type="match status" value="1"/>
</dbReference>
<dbReference type="InterPro" id="IPR013785">
    <property type="entry name" value="Aldolase_TIM"/>
</dbReference>
<dbReference type="InterPro" id="IPR035990">
    <property type="entry name" value="TIM_sf"/>
</dbReference>
<dbReference type="InterPro" id="IPR022896">
    <property type="entry name" value="TrioseP_Isoase_bac/euk"/>
</dbReference>
<dbReference type="InterPro" id="IPR000652">
    <property type="entry name" value="Triosephosphate_isomerase"/>
</dbReference>
<dbReference type="InterPro" id="IPR020861">
    <property type="entry name" value="Triosephosphate_isomerase_AS"/>
</dbReference>
<dbReference type="NCBIfam" id="TIGR00419">
    <property type="entry name" value="tim"/>
    <property type="match status" value="1"/>
</dbReference>
<dbReference type="PANTHER" id="PTHR21139">
    <property type="entry name" value="TRIOSEPHOSPHATE ISOMERASE"/>
    <property type="match status" value="1"/>
</dbReference>
<dbReference type="PANTHER" id="PTHR21139:SF42">
    <property type="entry name" value="TRIOSEPHOSPHATE ISOMERASE"/>
    <property type="match status" value="1"/>
</dbReference>
<dbReference type="Pfam" id="PF00121">
    <property type="entry name" value="TIM"/>
    <property type="match status" value="1"/>
</dbReference>
<dbReference type="SUPFAM" id="SSF51351">
    <property type="entry name" value="Triosephosphate isomerase (TIM)"/>
    <property type="match status" value="1"/>
</dbReference>
<dbReference type="PROSITE" id="PS00171">
    <property type="entry name" value="TIM_1"/>
    <property type="match status" value="1"/>
</dbReference>
<dbReference type="PROSITE" id="PS51440">
    <property type="entry name" value="TIM_2"/>
    <property type="match status" value="1"/>
</dbReference>
<reference key="1">
    <citation type="submission" date="2006-06" db="EMBL/GenBank/DDBJ databases">
        <title>Complete sequence of chromosome of Mycobacterium sp. MCS.</title>
        <authorList>
            <consortium name="US DOE Joint Genome Institute"/>
            <person name="Copeland A."/>
            <person name="Lucas S."/>
            <person name="Lapidus A."/>
            <person name="Barry K."/>
            <person name="Detter J.C."/>
            <person name="Glavina del Rio T."/>
            <person name="Hammon N."/>
            <person name="Israni S."/>
            <person name="Dalin E."/>
            <person name="Tice H."/>
            <person name="Pitluck S."/>
            <person name="Martinez M."/>
            <person name="Schmutz J."/>
            <person name="Larimer F."/>
            <person name="Land M."/>
            <person name="Hauser L."/>
            <person name="Kyrpides N."/>
            <person name="Kim E."/>
            <person name="Miller C.D."/>
            <person name="Hughes J.E."/>
            <person name="Anderson A.J."/>
            <person name="Sims R.C."/>
            <person name="Richardson P."/>
        </authorList>
    </citation>
    <scope>NUCLEOTIDE SEQUENCE [LARGE SCALE GENOMIC DNA]</scope>
    <source>
        <strain>MCS</strain>
    </source>
</reference>
<protein>
    <recommendedName>
        <fullName evidence="1">Triosephosphate isomerase</fullName>
        <shortName evidence="1">TIM</shortName>
        <shortName evidence="1">TPI</shortName>
        <ecNumber evidence="1">5.3.1.1</ecNumber>
    </recommendedName>
    <alternativeName>
        <fullName evidence="1">Triose-phosphate isomerase</fullName>
    </alternativeName>
</protein>
<organism>
    <name type="scientific">Mycobacterium sp. (strain MCS)</name>
    <dbReference type="NCBI Taxonomy" id="164756"/>
    <lineage>
        <taxon>Bacteria</taxon>
        <taxon>Bacillati</taxon>
        <taxon>Actinomycetota</taxon>
        <taxon>Actinomycetes</taxon>
        <taxon>Mycobacteriales</taxon>
        <taxon>Mycobacteriaceae</taxon>
        <taxon>Mycobacterium</taxon>
    </lineage>
</organism>
<comment type="function">
    <text evidence="1">Involved in the gluconeogenesis. Catalyzes stereospecifically the conversion of dihydroxyacetone phosphate (DHAP) to D-glyceraldehyde-3-phosphate (G3P).</text>
</comment>
<comment type="catalytic activity">
    <reaction evidence="1">
        <text>D-glyceraldehyde 3-phosphate = dihydroxyacetone phosphate</text>
        <dbReference type="Rhea" id="RHEA:18585"/>
        <dbReference type="ChEBI" id="CHEBI:57642"/>
        <dbReference type="ChEBI" id="CHEBI:59776"/>
        <dbReference type="EC" id="5.3.1.1"/>
    </reaction>
</comment>
<comment type="pathway">
    <text evidence="1">Carbohydrate biosynthesis; gluconeogenesis.</text>
</comment>
<comment type="pathway">
    <text evidence="1">Carbohydrate degradation; glycolysis; D-glyceraldehyde 3-phosphate from glycerone phosphate: step 1/1.</text>
</comment>
<comment type="subunit">
    <text evidence="1">Homodimer.</text>
</comment>
<comment type="subcellular location">
    <subcellularLocation>
        <location evidence="1">Cytoplasm</location>
    </subcellularLocation>
</comment>
<comment type="similarity">
    <text evidence="1">Belongs to the triosephosphate isomerase family.</text>
</comment>
<name>TPIS_MYCSS</name>
<gene>
    <name evidence="1" type="primary">tpiA</name>
    <name type="ordered locus">Mmcs_2406</name>
</gene>
<feature type="chain" id="PRO_0000307507" description="Triosephosphate isomerase">
    <location>
        <begin position="1"/>
        <end position="261"/>
    </location>
</feature>
<feature type="active site" description="Electrophile" evidence="1">
    <location>
        <position position="100"/>
    </location>
</feature>
<feature type="active site" description="Proton acceptor" evidence="1">
    <location>
        <position position="172"/>
    </location>
</feature>
<feature type="binding site" evidence="1">
    <location>
        <begin position="10"/>
        <end position="12"/>
    </location>
    <ligand>
        <name>substrate</name>
    </ligand>
</feature>
<feature type="binding site" evidence="1">
    <location>
        <position position="178"/>
    </location>
    <ligand>
        <name>substrate</name>
    </ligand>
</feature>
<feature type="binding site" evidence="1">
    <location>
        <position position="218"/>
    </location>
    <ligand>
        <name>substrate</name>
    </ligand>
</feature>
<feature type="binding site" evidence="1">
    <location>
        <begin position="239"/>
        <end position="240"/>
    </location>
    <ligand>
        <name>substrate</name>
    </ligand>
</feature>
<accession>Q1B9C0</accession>
<proteinExistence type="inferred from homology"/>